<organism>
    <name type="scientific">Glaesserella parasuis serovar 5 (strain SH0165)</name>
    <name type="common">Haemophilus parasuis</name>
    <dbReference type="NCBI Taxonomy" id="557723"/>
    <lineage>
        <taxon>Bacteria</taxon>
        <taxon>Pseudomonadati</taxon>
        <taxon>Pseudomonadota</taxon>
        <taxon>Gammaproteobacteria</taxon>
        <taxon>Pasteurellales</taxon>
        <taxon>Pasteurellaceae</taxon>
        <taxon>Glaesserella</taxon>
    </lineage>
</organism>
<comment type="function">
    <text evidence="1">Conversion of glycerol 3-phosphate to dihydroxyacetone. Uses fumarate or nitrate as electron acceptor.</text>
</comment>
<comment type="catalytic activity">
    <reaction evidence="1">
        <text>a quinone + sn-glycerol 3-phosphate = dihydroxyacetone phosphate + a quinol</text>
        <dbReference type="Rhea" id="RHEA:18977"/>
        <dbReference type="ChEBI" id="CHEBI:24646"/>
        <dbReference type="ChEBI" id="CHEBI:57597"/>
        <dbReference type="ChEBI" id="CHEBI:57642"/>
        <dbReference type="ChEBI" id="CHEBI:132124"/>
        <dbReference type="EC" id="1.1.5.3"/>
    </reaction>
</comment>
<comment type="cofactor">
    <cofactor evidence="1">
        <name>FMN</name>
        <dbReference type="ChEBI" id="CHEBI:58210"/>
    </cofactor>
</comment>
<comment type="pathway">
    <text evidence="1">Polyol metabolism; glycerol degradation via glycerol kinase pathway; glycerone phosphate from sn-glycerol 3-phosphate (anaerobic route): step 1/1.</text>
</comment>
<comment type="subunit">
    <text evidence="1">Composed of a catalytic GlpA/B dimer and of membrane bound GlpC.</text>
</comment>
<comment type="similarity">
    <text evidence="1">Belongs to the anaerobic G-3-P dehydrogenase subunit B family.</text>
</comment>
<gene>
    <name evidence="1" type="primary">glpB</name>
    <name type="ordered locus">HAPS_1315</name>
</gene>
<dbReference type="EC" id="1.1.5.3" evidence="1"/>
<dbReference type="EMBL" id="CP001321">
    <property type="protein sequence ID" value="ACL32905.1"/>
    <property type="molecule type" value="Genomic_DNA"/>
</dbReference>
<dbReference type="RefSeq" id="WP_015939721.1">
    <property type="nucleotide sequence ID" value="NC_011852.1"/>
</dbReference>
<dbReference type="STRING" id="557723.HAPS_1315"/>
<dbReference type="KEGG" id="hap:HAPS_1315"/>
<dbReference type="PATRIC" id="fig|557723.8.peg.1296"/>
<dbReference type="HOGENOM" id="CLU_047793_0_0_6"/>
<dbReference type="UniPathway" id="UPA00618">
    <property type="reaction ID" value="UER00673"/>
</dbReference>
<dbReference type="Proteomes" id="UP000006743">
    <property type="component" value="Chromosome"/>
</dbReference>
<dbReference type="GO" id="GO:0009331">
    <property type="term" value="C:glycerol-3-phosphate dehydrogenase (FAD) complex"/>
    <property type="evidence" value="ECO:0007669"/>
    <property type="project" value="InterPro"/>
</dbReference>
<dbReference type="GO" id="GO:0004368">
    <property type="term" value="F:glycerol-3-phosphate dehydrogenase (quinone) activity"/>
    <property type="evidence" value="ECO:0007669"/>
    <property type="project" value="UniProtKB-UniRule"/>
</dbReference>
<dbReference type="GO" id="GO:0019563">
    <property type="term" value="P:glycerol catabolic process"/>
    <property type="evidence" value="ECO:0007669"/>
    <property type="project" value="UniProtKB-UniRule"/>
</dbReference>
<dbReference type="Gene3D" id="3.50.50.60">
    <property type="entry name" value="FAD/NAD(P)-binding domain"/>
    <property type="match status" value="1"/>
</dbReference>
<dbReference type="HAMAP" id="MF_00753">
    <property type="entry name" value="Glycerol3P_GlpB"/>
    <property type="match status" value="1"/>
</dbReference>
<dbReference type="InterPro" id="IPR003953">
    <property type="entry name" value="FAD-dep_OxRdtase_2_FAD-bd"/>
</dbReference>
<dbReference type="InterPro" id="IPR050315">
    <property type="entry name" value="FAD-oxidoreductase_2"/>
</dbReference>
<dbReference type="InterPro" id="IPR036188">
    <property type="entry name" value="FAD/NAD-bd_sf"/>
</dbReference>
<dbReference type="InterPro" id="IPR009158">
    <property type="entry name" value="G3P_DH_GlpB_su"/>
</dbReference>
<dbReference type="NCBIfam" id="TIGR03378">
    <property type="entry name" value="glycerol3P_GlpB"/>
    <property type="match status" value="1"/>
</dbReference>
<dbReference type="NCBIfam" id="NF003718">
    <property type="entry name" value="PRK05329.1-1"/>
    <property type="match status" value="1"/>
</dbReference>
<dbReference type="NCBIfam" id="NF003719">
    <property type="entry name" value="PRK05329.1-2"/>
    <property type="match status" value="1"/>
</dbReference>
<dbReference type="NCBIfam" id="NF003720">
    <property type="entry name" value="PRK05329.1-3"/>
    <property type="match status" value="1"/>
</dbReference>
<dbReference type="NCBIfam" id="NF003721">
    <property type="entry name" value="PRK05329.1-4"/>
    <property type="match status" value="1"/>
</dbReference>
<dbReference type="PANTHER" id="PTHR43400:SF11">
    <property type="entry name" value="ANAEROBIC GLYCEROL-3-PHOSPHATE DEHYDROGENASE SUBUNIT B"/>
    <property type="match status" value="1"/>
</dbReference>
<dbReference type="PANTHER" id="PTHR43400">
    <property type="entry name" value="FUMARATE REDUCTASE"/>
    <property type="match status" value="1"/>
</dbReference>
<dbReference type="Pfam" id="PF00890">
    <property type="entry name" value="FAD_binding_2"/>
    <property type="match status" value="1"/>
</dbReference>
<dbReference type="PIRSF" id="PIRSF000141">
    <property type="entry name" value="Anaerobic_G3P_dh"/>
    <property type="match status" value="1"/>
</dbReference>
<dbReference type="SUPFAM" id="SSF51905">
    <property type="entry name" value="FAD/NAD(P)-binding domain"/>
    <property type="match status" value="1"/>
</dbReference>
<feature type="chain" id="PRO_1000148360" description="Anaerobic glycerol-3-phosphate dehydrogenase subunit B">
    <location>
        <begin position="1"/>
        <end position="427"/>
    </location>
</feature>
<accession>B8F6F3</accession>
<evidence type="ECO:0000255" key="1">
    <source>
        <dbReference type="HAMAP-Rule" id="MF_00753"/>
    </source>
</evidence>
<protein>
    <recommendedName>
        <fullName evidence="1">Anaerobic glycerol-3-phosphate dehydrogenase subunit B</fullName>
        <shortName evidence="1">Anaerobic G-3-P dehydrogenase subunit B</shortName>
        <shortName evidence="1">Anaerobic G3Pdhase B</shortName>
        <ecNumber evidence="1">1.1.5.3</ecNumber>
    </recommendedName>
</protein>
<name>GLPB_GLAP5</name>
<sequence>MNFDVVIIGGGLAGLTCGVALQEQGKRCVIINNGQAAIDFSSGSMDLLSRLPSGEFVADFYKSYATFAKQLPQHPYSLLGKEKVLAKATQFEQLATSLKLDLVGSTAQNHLRVTPLGGLRGAWLSPNSVPTVKGSEPFPHKTIAILGIEGYHDFQPQLLADNLKQNPQFTHCELSTGYLNIPELDQLRNNAREFRSVNIAQVLEHKLAFRDLVAEIKTATKGAEAIFLPACFGLDDQSFFNQLQQAVEATIFELPTLPPSLLGIRQHKQLRHRFERLGGLMLNGDRALKADIENGKVQRIYTQLHQDNAISAEHLVLATGSYFSNGLKADFDRIFEPVFQADIVGCKDFNETDRLSWTANRFSSPQPYQSAGVAINEKCQVRKDGQFMANLYATGNVIGGFNSLELGCGSGVAVVTALAVAEEIVGA</sequence>
<reference key="1">
    <citation type="journal article" date="2009" name="J. Bacteriol.">
        <title>Complete genome sequence of Haemophilus parasuis SH0165.</title>
        <authorList>
            <person name="Yue M."/>
            <person name="Yang F."/>
            <person name="Yang J."/>
            <person name="Bei W."/>
            <person name="Cai X."/>
            <person name="Chen L."/>
            <person name="Dong J."/>
            <person name="Zhou R."/>
            <person name="Jin M."/>
            <person name="Jin Q."/>
            <person name="Chen H."/>
        </authorList>
    </citation>
    <scope>NUCLEOTIDE SEQUENCE [LARGE SCALE GENOMIC DNA]</scope>
    <source>
        <strain>SH0165</strain>
    </source>
</reference>
<keyword id="KW-0285">Flavoprotein</keyword>
<keyword id="KW-0288">FMN</keyword>
<keyword id="KW-0560">Oxidoreductase</keyword>
<keyword id="KW-1185">Reference proteome</keyword>
<proteinExistence type="inferred from homology"/>